<organism>
    <name type="scientific">Drosophila melanogaster</name>
    <name type="common">Fruit fly</name>
    <dbReference type="NCBI Taxonomy" id="7227"/>
    <lineage>
        <taxon>Eukaryota</taxon>
        <taxon>Metazoa</taxon>
        <taxon>Ecdysozoa</taxon>
        <taxon>Arthropoda</taxon>
        <taxon>Hexapoda</taxon>
        <taxon>Insecta</taxon>
        <taxon>Pterygota</taxon>
        <taxon>Neoptera</taxon>
        <taxon>Endopterygota</taxon>
        <taxon>Diptera</taxon>
        <taxon>Brachycera</taxon>
        <taxon>Muscomorpha</taxon>
        <taxon>Ephydroidea</taxon>
        <taxon>Drosophilidae</taxon>
        <taxon>Drosophila</taxon>
        <taxon>Sophophora</taxon>
    </lineage>
</organism>
<comment type="function">
    <text evidence="3 4 5 6 7 8 9">One of the few identified sugar gustatory receptors identified so far and which promotes the starvation-induced increase of feeding motivation. Required in combination with Gr64f to detect sucrose, maltose, and glucose.</text>
</comment>
<comment type="subunit">
    <text evidence="9">Homotetramer.</text>
</comment>
<comment type="subcellular location">
    <subcellularLocation>
        <location evidence="1">Cell membrane</location>
        <topology evidence="1">Multi-pass membrane protein</topology>
    </subcellularLocation>
</comment>
<comment type="tissue specificity">
    <text evidence="3">Expressed in Gr5a-expressing sugar-sensing cells.</text>
</comment>
<comment type="induction">
    <text evidence="7">Expression is increased by starvation.</text>
</comment>
<comment type="similarity">
    <text evidence="10">Belongs to the insect chemoreceptor superfamily. Gustatory receptor (GR) family. Gr5a subfamily.</text>
</comment>
<sequence length="456" mass="52823">MKGPNLNFRKTPSKDNGVKQVESLARPETPPPKFVEDSNLEFNVLASEKLPNYTNLDLFHRAVFPFMFLAQCVAIMPLVGIRESNPRRVRFAYKSIPMFVTLIFMIATSILFLSMFTHLLKIGITAKNFVGLVFFGCVLSAYVVFIRLAKKWPAVVRIWTRTEIPFTKPPYEIPKRNLSRRVQLAALAIIGLSLGEHALYQVSAILSYTRRIQMCANITTVPSFNNYMQTNYDYVFQLLPYSPIIAVLILLINGACTFVWNYMDLFIMMISKGLSYRFEQITTRIRKLEHEEVCESVFIQIREHYVKMCELLEFVDSAMSSLILLSCVNNLYFVCYQLLNVFNKLRWPINYIYFWYSLLYLIGRTAFVFLTAADINEESKRGLGVLRRVSSRSWCVEVERLIFQMTTQTVALSGKKFYFLTRRLLFGMAGTIVTYELVLLQFDEPNRRKGLQPLCA</sequence>
<gene>
    <name type="primary">Gr64a</name>
    <name type="ORF">CG32261</name>
</gene>
<proteinExistence type="evidence at protein level"/>
<dbReference type="EMBL" id="AE014296">
    <property type="protein sequence ID" value="AAN11576.1"/>
    <property type="molecule type" value="Genomic_DNA"/>
</dbReference>
<dbReference type="RefSeq" id="NP_728920.1">
    <property type="nucleotide sequence ID" value="NM_168048.2"/>
</dbReference>
<dbReference type="PDB" id="8JME">
    <property type="method" value="EM"/>
    <property type="resolution" value="2.50 A"/>
    <property type="chains" value="A/B/C/D=1-456"/>
</dbReference>
<dbReference type="PDB" id="8JMH">
    <property type="method" value="EM"/>
    <property type="resolution" value="2.50 A"/>
    <property type="chains" value="A/B/C/D=1-456"/>
</dbReference>
<dbReference type="PDB" id="8JMI">
    <property type="method" value="EM"/>
    <property type="resolution" value="2.60 A"/>
    <property type="chains" value="A/B/C/D=1-456"/>
</dbReference>
<dbReference type="PDB" id="8ZE0">
    <property type="method" value="EM"/>
    <property type="resolution" value="2.54 A"/>
    <property type="chains" value="A/B/C/D=1-456"/>
</dbReference>
<dbReference type="PDB" id="8ZE2">
    <property type="method" value="EM"/>
    <property type="resolution" value="2.57 A"/>
    <property type="chains" value="A/B/C/D=1-456"/>
</dbReference>
<dbReference type="PDBsum" id="8JME"/>
<dbReference type="PDBsum" id="8JMH"/>
<dbReference type="PDBsum" id="8JMI"/>
<dbReference type="PDBsum" id="8ZE0"/>
<dbReference type="PDBsum" id="8ZE2"/>
<dbReference type="EMDB" id="EMD-36417"/>
<dbReference type="EMDB" id="EMD-36421"/>
<dbReference type="EMDB" id="EMD-36422"/>
<dbReference type="EMDB" id="EMD-60019"/>
<dbReference type="EMDB" id="EMD-60021"/>
<dbReference type="SMR" id="P83293"/>
<dbReference type="FunCoup" id="P83293">
    <property type="interactions" value="9"/>
</dbReference>
<dbReference type="STRING" id="7227.FBpp0073050"/>
<dbReference type="TCDB" id="1.A.69.2.7">
    <property type="family name" value="the heteromeric odorant receptor channel (horc) family"/>
</dbReference>
<dbReference type="GlyCosmos" id="P83293">
    <property type="glycosylation" value="1 site, No reported glycans"/>
</dbReference>
<dbReference type="GlyGen" id="P83293">
    <property type="glycosylation" value="1 site"/>
</dbReference>
<dbReference type="PaxDb" id="7227-FBpp0073050"/>
<dbReference type="EnsemblMetazoa" id="FBtr0073194">
    <property type="protein sequence ID" value="FBpp0073050"/>
    <property type="gene ID" value="FBgn0045479"/>
</dbReference>
<dbReference type="GeneID" id="117481"/>
<dbReference type="KEGG" id="dme:Dmel_CG32261"/>
<dbReference type="AGR" id="FB:FBgn0045479"/>
<dbReference type="CTD" id="117481"/>
<dbReference type="FlyBase" id="FBgn0045479">
    <property type="gene designation" value="Gr64a"/>
</dbReference>
<dbReference type="VEuPathDB" id="VectorBase:FBgn0045479"/>
<dbReference type="eggNOG" id="ENOG502QTKP">
    <property type="taxonomic scope" value="Eukaryota"/>
</dbReference>
<dbReference type="GeneTree" id="ENSGT00530000064347"/>
<dbReference type="HOGENOM" id="CLU_043581_1_0_1"/>
<dbReference type="InParanoid" id="P83293"/>
<dbReference type="OMA" id="PAVVRIW"/>
<dbReference type="OrthoDB" id="5800391at2759"/>
<dbReference type="PhylomeDB" id="P83293"/>
<dbReference type="BioGRID-ORCS" id="117481">
    <property type="hits" value="0 hits in 1 CRISPR screen"/>
</dbReference>
<dbReference type="GenomeRNAi" id="117481"/>
<dbReference type="PRO" id="PR:P83293"/>
<dbReference type="Proteomes" id="UP000000803">
    <property type="component" value="Chromosome 3L"/>
</dbReference>
<dbReference type="Bgee" id="FBgn0045479">
    <property type="expression patterns" value="Expressed in wing disc"/>
</dbReference>
<dbReference type="ExpressionAtlas" id="P83293">
    <property type="expression patterns" value="baseline and differential"/>
</dbReference>
<dbReference type="GO" id="GO:0016020">
    <property type="term" value="C:membrane"/>
    <property type="evidence" value="ECO:0000303"/>
    <property type="project" value="UniProtKB"/>
</dbReference>
<dbReference type="GO" id="GO:0005886">
    <property type="term" value="C:plasma membrane"/>
    <property type="evidence" value="ECO:0000250"/>
    <property type="project" value="FlyBase"/>
</dbReference>
<dbReference type="GO" id="GO:0170023">
    <property type="term" value="F:ionotropic sweet taste receptor activity"/>
    <property type="evidence" value="ECO:0000315"/>
    <property type="project" value="FlyBase"/>
</dbReference>
<dbReference type="GO" id="GO:0015276">
    <property type="term" value="F:ligand-gated monoatomic ion channel activity"/>
    <property type="evidence" value="ECO:0000250"/>
    <property type="project" value="FlyBase"/>
</dbReference>
<dbReference type="GO" id="GO:0033041">
    <property type="term" value="F:sweet taste receptor activity"/>
    <property type="evidence" value="ECO:0000315"/>
    <property type="project" value="FlyBase"/>
</dbReference>
<dbReference type="GO" id="GO:0008527">
    <property type="term" value="F:taste receptor activity"/>
    <property type="evidence" value="ECO:0000303"/>
    <property type="project" value="UniProtKB"/>
</dbReference>
<dbReference type="GO" id="GO:0050912">
    <property type="term" value="P:detection of chemical stimulus involved in sensory perception of taste"/>
    <property type="evidence" value="ECO:0000316"/>
    <property type="project" value="FlyBase"/>
</dbReference>
<dbReference type="GO" id="GO:0034220">
    <property type="term" value="P:monoatomic ion transmembrane transport"/>
    <property type="evidence" value="ECO:0000250"/>
    <property type="project" value="FlyBase"/>
</dbReference>
<dbReference type="GO" id="GO:0007637">
    <property type="term" value="P:proboscis extension reflex"/>
    <property type="evidence" value="ECO:0000315"/>
    <property type="project" value="FlyBase"/>
</dbReference>
<dbReference type="GO" id="GO:0050916">
    <property type="term" value="P:sensory perception of sweet taste"/>
    <property type="evidence" value="ECO:0000315"/>
    <property type="project" value="FlyBase"/>
</dbReference>
<dbReference type="GO" id="GO:0050909">
    <property type="term" value="P:sensory perception of taste"/>
    <property type="evidence" value="ECO:0000303"/>
    <property type="project" value="UniProtKB"/>
</dbReference>
<dbReference type="GO" id="GO:0007165">
    <property type="term" value="P:signal transduction"/>
    <property type="evidence" value="ECO:0007669"/>
    <property type="project" value="UniProtKB-KW"/>
</dbReference>
<dbReference type="InterPro" id="IPR009318">
    <property type="entry name" value="Gustatory_rcpt"/>
</dbReference>
<dbReference type="PANTHER" id="PTHR21421">
    <property type="entry name" value="GUSTATORY RECEPTOR"/>
    <property type="match status" value="1"/>
</dbReference>
<dbReference type="PANTHER" id="PTHR21421:SF34">
    <property type="entry name" value="GUSTATORY RECEPTOR FOR SUGAR TASTE 61A-RELATED"/>
    <property type="match status" value="1"/>
</dbReference>
<dbReference type="Pfam" id="PF06151">
    <property type="entry name" value="Trehalose_recp"/>
    <property type="match status" value="1"/>
</dbReference>
<dbReference type="PIRSF" id="PIRSF038981">
    <property type="entry name" value="GRP"/>
    <property type="match status" value="1"/>
</dbReference>
<protein>
    <recommendedName>
        <fullName>Gustatory receptor for sugar taste 64a</fullName>
    </recommendedName>
</protein>
<evidence type="ECO:0000250" key="1"/>
<evidence type="ECO:0000256" key="2">
    <source>
        <dbReference type="SAM" id="MobiDB-lite"/>
    </source>
</evidence>
<evidence type="ECO:0000269" key="3">
    <source>
    </source>
</evidence>
<evidence type="ECO:0000269" key="4">
    <source>
    </source>
</evidence>
<evidence type="ECO:0000269" key="5">
    <source>
    </source>
</evidence>
<evidence type="ECO:0000269" key="6">
    <source>
    </source>
</evidence>
<evidence type="ECO:0000269" key="7">
    <source>
    </source>
</evidence>
<evidence type="ECO:0000269" key="8">
    <source>
    </source>
</evidence>
<evidence type="ECO:0000269" key="9">
    <source>
    </source>
</evidence>
<evidence type="ECO:0000305" key="10"/>
<evidence type="ECO:0007744" key="11">
    <source>
        <dbReference type="PDB" id="8JME"/>
    </source>
</evidence>
<evidence type="ECO:0007744" key="12">
    <source>
        <dbReference type="PDB" id="8JMH"/>
    </source>
</evidence>
<evidence type="ECO:0007744" key="13">
    <source>
        <dbReference type="PDB" id="8JMI"/>
    </source>
</evidence>
<evidence type="ECO:0007829" key="14">
    <source>
        <dbReference type="PDB" id="8JME"/>
    </source>
</evidence>
<evidence type="ECO:0007829" key="15">
    <source>
        <dbReference type="PDB" id="8JMH"/>
    </source>
</evidence>
<evidence type="ECO:0007829" key="16">
    <source>
        <dbReference type="PDB" id="8ZE0"/>
    </source>
</evidence>
<evidence type="ECO:0007829" key="17">
    <source>
        <dbReference type="PDB" id="8ZE2"/>
    </source>
</evidence>
<reference key="1">
    <citation type="journal article" date="2000" name="Science">
        <title>The genome sequence of Drosophila melanogaster.</title>
        <authorList>
            <person name="Adams M.D."/>
            <person name="Celniker S.E."/>
            <person name="Holt R.A."/>
            <person name="Evans C.A."/>
            <person name="Gocayne J.D."/>
            <person name="Amanatides P.G."/>
            <person name="Scherer S.E."/>
            <person name="Li P.W."/>
            <person name="Hoskins R.A."/>
            <person name="Galle R.F."/>
            <person name="George R.A."/>
            <person name="Lewis S.E."/>
            <person name="Richards S."/>
            <person name="Ashburner M."/>
            <person name="Henderson S.N."/>
            <person name="Sutton G.G."/>
            <person name="Wortman J.R."/>
            <person name="Yandell M.D."/>
            <person name="Zhang Q."/>
            <person name="Chen L.X."/>
            <person name="Brandon R.C."/>
            <person name="Rogers Y.-H.C."/>
            <person name="Blazej R.G."/>
            <person name="Champe M."/>
            <person name="Pfeiffer B.D."/>
            <person name="Wan K.H."/>
            <person name="Doyle C."/>
            <person name="Baxter E.G."/>
            <person name="Helt G."/>
            <person name="Nelson C.R."/>
            <person name="Miklos G.L.G."/>
            <person name="Abril J.F."/>
            <person name="Agbayani A."/>
            <person name="An H.-J."/>
            <person name="Andrews-Pfannkoch C."/>
            <person name="Baldwin D."/>
            <person name="Ballew R.M."/>
            <person name="Basu A."/>
            <person name="Baxendale J."/>
            <person name="Bayraktaroglu L."/>
            <person name="Beasley E.M."/>
            <person name="Beeson K.Y."/>
            <person name="Benos P.V."/>
            <person name="Berman B.P."/>
            <person name="Bhandari D."/>
            <person name="Bolshakov S."/>
            <person name="Borkova D."/>
            <person name="Botchan M.R."/>
            <person name="Bouck J."/>
            <person name="Brokstein P."/>
            <person name="Brottier P."/>
            <person name="Burtis K.C."/>
            <person name="Busam D.A."/>
            <person name="Butler H."/>
            <person name="Cadieu E."/>
            <person name="Center A."/>
            <person name="Chandra I."/>
            <person name="Cherry J.M."/>
            <person name="Cawley S."/>
            <person name="Dahlke C."/>
            <person name="Davenport L.B."/>
            <person name="Davies P."/>
            <person name="de Pablos B."/>
            <person name="Delcher A."/>
            <person name="Deng Z."/>
            <person name="Mays A.D."/>
            <person name="Dew I."/>
            <person name="Dietz S.M."/>
            <person name="Dodson K."/>
            <person name="Doup L.E."/>
            <person name="Downes M."/>
            <person name="Dugan-Rocha S."/>
            <person name="Dunkov B.C."/>
            <person name="Dunn P."/>
            <person name="Durbin K.J."/>
            <person name="Evangelista C.C."/>
            <person name="Ferraz C."/>
            <person name="Ferriera S."/>
            <person name="Fleischmann W."/>
            <person name="Fosler C."/>
            <person name="Gabrielian A.E."/>
            <person name="Garg N.S."/>
            <person name="Gelbart W.M."/>
            <person name="Glasser K."/>
            <person name="Glodek A."/>
            <person name="Gong F."/>
            <person name="Gorrell J.H."/>
            <person name="Gu Z."/>
            <person name="Guan P."/>
            <person name="Harris M."/>
            <person name="Harris N.L."/>
            <person name="Harvey D.A."/>
            <person name="Heiman T.J."/>
            <person name="Hernandez J.R."/>
            <person name="Houck J."/>
            <person name="Hostin D."/>
            <person name="Houston K.A."/>
            <person name="Howland T.J."/>
            <person name="Wei M.-H."/>
            <person name="Ibegwam C."/>
            <person name="Jalali M."/>
            <person name="Kalush F."/>
            <person name="Karpen G.H."/>
            <person name="Ke Z."/>
            <person name="Kennison J.A."/>
            <person name="Ketchum K.A."/>
            <person name="Kimmel B.E."/>
            <person name="Kodira C.D."/>
            <person name="Kraft C.L."/>
            <person name="Kravitz S."/>
            <person name="Kulp D."/>
            <person name="Lai Z."/>
            <person name="Lasko P."/>
            <person name="Lei Y."/>
            <person name="Levitsky A.A."/>
            <person name="Li J.H."/>
            <person name="Li Z."/>
            <person name="Liang Y."/>
            <person name="Lin X."/>
            <person name="Liu X."/>
            <person name="Mattei B."/>
            <person name="McIntosh T.C."/>
            <person name="McLeod M.P."/>
            <person name="McPherson D."/>
            <person name="Merkulov G."/>
            <person name="Milshina N.V."/>
            <person name="Mobarry C."/>
            <person name="Morris J."/>
            <person name="Moshrefi A."/>
            <person name="Mount S.M."/>
            <person name="Moy M."/>
            <person name="Murphy B."/>
            <person name="Murphy L."/>
            <person name="Muzny D.M."/>
            <person name="Nelson D.L."/>
            <person name="Nelson D.R."/>
            <person name="Nelson K.A."/>
            <person name="Nixon K."/>
            <person name="Nusskern D.R."/>
            <person name="Pacleb J.M."/>
            <person name="Palazzolo M."/>
            <person name="Pittman G.S."/>
            <person name="Pan S."/>
            <person name="Pollard J."/>
            <person name="Puri V."/>
            <person name="Reese M.G."/>
            <person name="Reinert K."/>
            <person name="Remington K."/>
            <person name="Saunders R.D.C."/>
            <person name="Scheeler F."/>
            <person name="Shen H."/>
            <person name="Shue B.C."/>
            <person name="Siden-Kiamos I."/>
            <person name="Simpson M."/>
            <person name="Skupski M.P."/>
            <person name="Smith T.J."/>
            <person name="Spier E."/>
            <person name="Spradling A.C."/>
            <person name="Stapleton M."/>
            <person name="Strong R."/>
            <person name="Sun E."/>
            <person name="Svirskas R."/>
            <person name="Tector C."/>
            <person name="Turner R."/>
            <person name="Venter E."/>
            <person name="Wang A.H."/>
            <person name="Wang X."/>
            <person name="Wang Z.-Y."/>
            <person name="Wassarman D.A."/>
            <person name="Weinstock G.M."/>
            <person name="Weissenbach J."/>
            <person name="Williams S.M."/>
            <person name="Woodage T."/>
            <person name="Worley K.C."/>
            <person name="Wu D."/>
            <person name="Yang S."/>
            <person name="Yao Q.A."/>
            <person name="Ye J."/>
            <person name="Yeh R.-F."/>
            <person name="Zaveri J.S."/>
            <person name="Zhan M."/>
            <person name="Zhang G."/>
            <person name="Zhao Q."/>
            <person name="Zheng L."/>
            <person name="Zheng X.H."/>
            <person name="Zhong F.N."/>
            <person name="Zhong W."/>
            <person name="Zhou X."/>
            <person name="Zhu S.C."/>
            <person name="Zhu X."/>
            <person name="Smith H.O."/>
            <person name="Gibbs R.A."/>
            <person name="Myers E.W."/>
            <person name="Rubin G.M."/>
            <person name="Venter J.C."/>
        </authorList>
    </citation>
    <scope>NUCLEOTIDE SEQUENCE [LARGE SCALE GENOMIC DNA]</scope>
    <source>
        <strain>Berkeley</strain>
    </source>
</reference>
<reference key="2">
    <citation type="journal article" date="2002" name="Genome Biol.">
        <title>Annotation of the Drosophila melanogaster euchromatic genome: a systematic review.</title>
        <authorList>
            <person name="Misra S."/>
            <person name="Crosby M.A."/>
            <person name="Mungall C.J."/>
            <person name="Matthews B.B."/>
            <person name="Campbell K.S."/>
            <person name="Hradecky P."/>
            <person name="Huang Y."/>
            <person name="Kaminker J.S."/>
            <person name="Millburn G.H."/>
            <person name="Prochnik S.E."/>
            <person name="Smith C.D."/>
            <person name="Tupy J.L."/>
            <person name="Whitfield E.J."/>
            <person name="Bayraktaroglu L."/>
            <person name="Berman B.P."/>
            <person name="Bettencourt B.R."/>
            <person name="Celniker S.E."/>
            <person name="de Grey A.D.N.J."/>
            <person name="Drysdale R.A."/>
            <person name="Harris N.L."/>
            <person name="Richter J."/>
            <person name="Russo S."/>
            <person name="Schroeder A.J."/>
            <person name="Shu S.Q."/>
            <person name="Stapleton M."/>
            <person name="Yamada C."/>
            <person name="Ashburner M."/>
            <person name="Gelbart W.M."/>
            <person name="Rubin G.M."/>
            <person name="Lewis S.E."/>
        </authorList>
    </citation>
    <scope>GENOME REANNOTATION</scope>
    <source>
        <strain>Berkeley</strain>
    </source>
</reference>
<reference key="3">
    <citation type="journal article" date="2001" name="Curr. Biol.">
        <title>Spatially restricted expression of candidate taste receptors in the Drosophila gustatory system.</title>
        <authorList>
            <person name="Dunipace L."/>
            <person name="Meister S."/>
            <person name="McNealy C."/>
            <person name="Amrein H."/>
        </authorList>
    </citation>
    <scope>IDENTIFICATION</scope>
</reference>
<reference key="4">
    <citation type="journal article" date="2003" name="Proc. Natl. Acad. Sci. U.S.A.">
        <title>Molecular evolution of the insect chemoreceptor gene superfamily in Drosophila melanogaster.</title>
        <authorList>
            <person name="Robertson H.M."/>
            <person name="Warr C.G."/>
            <person name="Carlson J.R."/>
        </authorList>
    </citation>
    <scope>PREDICTION OF FUNCTION</scope>
</reference>
<reference key="5">
    <citation type="journal article" date="2007" name="Neuron">
        <title>Two Gr genes underlie sugar reception in Drosophila.</title>
        <authorList>
            <person name="Dahanukar A."/>
            <person name="Lei Y.T."/>
            <person name="Kwon J.Y."/>
            <person name="Carlson J.R."/>
        </authorList>
    </citation>
    <scope>FUNCTION</scope>
</reference>
<reference key="6">
    <citation type="journal article" date="2007" name="Proc. Natl. Acad. Sci. U.S.A.">
        <title>A Drosophila gustatory receptor required for the responses to sucrose, glucose, and maltose identified by mRNA tagging.</title>
        <authorList>
            <person name="Jiao Y."/>
            <person name="Moon S.J."/>
            <person name="Montell C."/>
        </authorList>
    </citation>
    <scope>FUNCTION</scope>
    <scope>TISSUE SPECIFICITY</scope>
</reference>
<reference key="7">
    <citation type="journal article" date="2008" name="Curr. Biol.">
        <title>Gr64f is required in combination with other gustatory receptors for sugar detection in Drosophila.</title>
        <authorList>
            <person name="Jiao Y."/>
            <person name="Moon S.J."/>
            <person name="Wang X."/>
            <person name="Ren Q."/>
            <person name="Montell C."/>
        </authorList>
    </citation>
    <scope>FUNCTION</scope>
</reference>
<reference key="8">
    <citation type="journal article" date="2011" name="Proc. Natl. Acad. Sci. U.S.A.">
        <title>Taste-independent detection of the caloric content of sugar in Drosophila.</title>
        <authorList>
            <person name="Dus M."/>
            <person name="Min S."/>
            <person name="Keene A.C."/>
            <person name="Lee G.Y."/>
            <person name="Suh G.S."/>
        </authorList>
    </citation>
    <scope>FUNCTION</scope>
</reference>
<reference key="9">
    <citation type="journal article" date="2012" name="J. Neurogenet.">
        <title>Starvation-induced elevation of taste responsiveness and expression of a sugar taste receptor gene in Drosophila melanogaster.</title>
        <authorList>
            <person name="Nishimura A."/>
            <person name="Ishida Y."/>
            <person name="Takahashi A."/>
            <person name="Okamoto H."/>
            <person name="Sakabe M."/>
            <person name="Itoh M."/>
            <person name="Takano-Shimizu T."/>
            <person name="Ozaki M."/>
        </authorList>
    </citation>
    <scope>FUNCTION</scope>
    <scope>INDUCTION</scope>
</reference>
<reference key="10">
    <citation type="journal article" date="2013" name="Curr. Biol.">
        <title>The molecular basis of sugar sensing in Drosophila larvae.</title>
        <authorList>
            <person name="Mishra D."/>
            <person name="Miyamoto T."/>
            <person name="Rezenom Y.H."/>
            <person name="Broussard A."/>
            <person name="Yavuz A."/>
            <person name="Slone J."/>
            <person name="Russell D.H."/>
            <person name="Amrein H."/>
        </authorList>
    </citation>
    <scope>FUNCTION</scope>
</reference>
<reference evidence="11 12 13" key="11">
    <citation type="journal article" date="2024" name="Science">
        <title>Structural basis for sugar perception by Drosophila gustatory receptors.</title>
        <authorList>
            <person name="Ma D."/>
            <person name="Hu M."/>
            <person name="Yang X."/>
            <person name="Liu Q."/>
            <person name="Ye F."/>
            <person name="Cai W."/>
            <person name="Wang Y."/>
            <person name="Xu X."/>
            <person name="Chang S."/>
            <person name="Wang R."/>
            <person name="Yang W."/>
            <person name="Ye S."/>
            <person name="Su N."/>
            <person name="Fan M."/>
            <person name="Xu H."/>
            <person name="Guo J."/>
        </authorList>
    </citation>
    <scope>STRUCTURE BY ELECTRON MICROSCOPY (2.6 ANGSTROMS) IN APO FORM AND IN COMPLEXES WITH SUCROSE AND MALTOSE</scope>
    <scope>FUNCTION</scope>
    <scope>SUBUNIT</scope>
    <scope>MUTAGENESIS OF PHE-134; PHE-135; GLU-196; HIS-197; TYR-200; TYR-234; ASN-253; THR-257; TRP-260; PHE-333 AND TYR-353</scope>
    <scope>TRANSMEMBRANE DOMAINS</scope>
</reference>
<name>GR64A_DROME</name>
<feature type="chain" id="PRO_0000216528" description="Gustatory receptor for sugar taste 64a">
    <location>
        <begin position="1"/>
        <end position="456"/>
    </location>
</feature>
<feature type="topological domain" description="Cytoplasmic" evidence="9 11">
    <location>
        <begin position="1"/>
        <end position="91"/>
    </location>
</feature>
<feature type="transmembrane region" description="Helical; Name=S1" evidence="9 11">
    <location>
        <begin position="92"/>
        <end position="114"/>
    </location>
</feature>
<feature type="topological domain" description="Extracellular" evidence="9 11">
    <location>
        <begin position="115"/>
        <end position="128"/>
    </location>
</feature>
<feature type="transmembrane region" description="Helical; Name=S2" evidence="9 11">
    <location>
        <begin position="129"/>
        <end position="150"/>
    </location>
</feature>
<feature type="topological domain" description="Cytoplasmic" evidence="9 11">
    <location>
        <begin position="151"/>
        <end position="182"/>
    </location>
</feature>
<feature type="transmembrane region" description="Helical; Name=S3" evidence="9 11">
    <location>
        <begin position="183"/>
        <end position="205"/>
    </location>
</feature>
<feature type="topological domain" description="Extracellular" evidence="9 11">
    <location>
        <begin position="206"/>
        <end position="245"/>
    </location>
</feature>
<feature type="transmembrane region" description="Helical; Name=S4" evidence="9 11">
    <location>
        <begin position="246"/>
        <end position="271"/>
    </location>
</feature>
<feature type="topological domain" description="Cytoplasmic" evidence="9 11">
    <location>
        <begin position="272"/>
        <end position="318"/>
    </location>
</feature>
<feature type="transmembrane region" description="Helical; Name=S5" evidence="9 11">
    <location>
        <begin position="319"/>
        <end position="342"/>
    </location>
</feature>
<feature type="topological domain" description="Extracellular" evidence="9 11">
    <location>
        <begin position="343"/>
        <end position="350"/>
    </location>
</feature>
<feature type="transmembrane region" description="Helical; Name=S6" evidence="9 11">
    <location>
        <begin position="351"/>
        <end position="373"/>
    </location>
</feature>
<feature type="topological domain" description="Cytoplasmic" evidence="9 11">
    <location>
        <begin position="374"/>
        <end position="421"/>
    </location>
</feature>
<feature type="transmembrane region" description="Helical; Name=S7b" evidence="9 11">
    <location>
        <begin position="422"/>
        <end position="441"/>
    </location>
</feature>
<feature type="topological domain" description="Extracellular" evidence="9 11">
    <location>
        <begin position="442"/>
        <end position="456"/>
    </location>
</feature>
<feature type="region of interest" description="Disordered" evidence="2">
    <location>
        <begin position="1"/>
        <end position="30"/>
    </location>
</feature>
<feature type="binding site" evidence="9 12">
    <location>
        <position position="131"/>
    </location>
    <ligand>
        <name>sucrose</name>
        <dbReference type="ChEBI" id="CHEBI:17992"/>
    </ligand>
</feature>
<feature type="binding site" evidence="9 13">
    <location>
        <position position="196"/>
    </location>
    <ligand>
        <name>D-maltose</name>
        <dbReference type="ChEBI" id="CHEBI:17306"/>
    </ligand>
</feature>
<feature type="binding site" evidence="9 12">
    <location>
        <position position="196"/>
    </location>
    <ligand>
        <name>sucrose</name>
        <dbReference type="ChEBI" id="CHEBI:17992"/>
    </ligand>
</feature>
<feature type="binding site" evidence="9 13">
    <location>
        <position position="197"/>
    </location>
    <ligand>
        <name>D-maltose</name>
        <dbReference type="ChEBI" id="CHEBI:17306"/>
    </ligand>
</feature>
<feature type="binding site" evidence="9 12">
    <location>
        <position position="197"/>
    </location>
    <ligand>
        <name>sucrose</name>
        <dbReference type="ChEBI" id="CHEBI:17992"/>
    </ligand>
</feature>
<feature type="binding site" evidence="9 13">
    <location>
        <position position="234"/>
    </location>
    <ligand>
        <name>D-maltose</name>
        <dbReference type="ChEBI" id="CHEBI:17306"/>
    </ligand>
</feature>
<feature type="binding site" evidence="9 12">
    <location>
        <position position="234"/>
    </location>
    <ligand>
        <name>sucrose</name>
        <dbReference type="ChEBI" id="CHEBI:17992"/>
    </ligand>
</feature>
<feature type="binding site" evidence="9 13">
    <location>
        <position position="253"/>
    </location>
    <ligand>
        <name>D-maltose</name>
        <dbReference type="ChEBI" id="CHEBI:17306"/>
    </ligand>
</feature>
<feature type="binding site" evidence="9 13">
    <location>
        <position position="257"/>
    </location>
    <ligand>
        <name>D-maltose</name>
        <dbReference type="ChEBI" id="CHEBI:17306"/>
    </ligand>
</feature>
<feature type="binding site" evidence="9 12">
    <location>
        <position position="257"/>
    </location>
    <ligand>
        <name>sucrose</name>
        <dbReference type="ChEBI" id="CHEBI:17992"/>
    </ligand>
</feature>
<feature type="binding site" evidence="9 13">
    <location>
        <position position="353"/>
    </location>
    <ligand>
        <name>D-maltose</name>
        <dbReference type="ChEBI" id="CHEBI:17306"/>
    </ligand>
</feature>
<feature type="binding site" evidence="9 12">
    <location>
        <position position="353"/>
    </location>
    <ligand>
        <name>sucrose</name>
        <dbReference type="ChEBI" id="CHEBI:17992"/>
    </ligand>
</feature>
<feature type="mutagenesis site" description="Abolishes sucrose- and maltose-induced currents." evidence="9">
    <original>F</original>
    <variation>A</variation>
    <location>
        <position position="134"/>
    </location>
</feature>
<feature type="mutagenesis site" description="Abolishes sucrose- and maltose-induced currents." evidence="9">
    <original>F</original>
    <variation>A</variation>
    <location>
        <position position="135"/>
    </location>
</feature>
<feature type="mutagenesis site" description="Abolishes sucrose- and maltose-induced currents." evidence="9">
    <original>E</original>
    <variation>A</variation>
    <location>
        <position position="196"/>
    </location>
</feature>
<feature type="mutagenesis site" description="Abolishes sucrose-induced current but has no effect on maltose activation." evidence="9">
    <original>H</original>
    <variation>A</variation>
    <location>
        <position position="197"/>
    </location>
</feature>
<feature type="mutagenesis site" description="No effect on sucrose or maltose activation." evidence="9">
    <original>Y</original>
    <variation>A</variation>
    <location>
        <position position="200"/>
    </location>
</feature>
<feature type="mutagenesis site" description="Abolishes sucrose- and maltose-induced currents." evidence="9">
    <original>Y</original>
    <variation>A</variation>
    <location>
        <position position="234"/>
    </location>
</feature>
<feature type="mutagenesis site" description="No effect on sucrose or maltose activation." evidence="9">
    <original>N</original>
    <variation>A</variation>
    <location>
        <position position="253"/>
    </location>
</feature>
<feature type="mutagenesis site" description="Abolishes sucrose-induced current but has no effect on maltose-induced activation current." evidence="9">
    <original>T</original>
    <variation>A</variation>
    <location>
        <position position="257"/>
    </location>
</feature>
<feature type="mutagenesis site" description="Abolishes sucrose- and maltose-induced currents." evidence="9">
    <original>W</original>
    <variation>A</variation>
    <location>
        <position position="260"/>
    </location>
</feature>
<feature type="mutagenesis site" description="Abolishes sucrose- and maltose-induced currents." evidence="9">
    <original>F</original>
    <variation>A</variation>
    <location>
        <position position="333"/>
    </location>
</feature>
<feature type="mutagenesis site" description="Abolishes sucrose- and maltose-induced currents." evidence="9">
    <original>Y</original>
    <variation>A</variation>
    <location>
        <position position="353"/>
    </location>
</feature>
<feature type="turn" evidence="14">
    <location>
        <begin position="53"/>
        <end position="55"/>
    </location>
</feature>
<feature type="helix" evidence="14">
    <location>
        <begin position="59"/>
        <end position="72"/>
    </location>
</feature>
<feature type="turn" evidence="14">
    <location>
        <begin position="80"/>
        <end position="82"/>
    </location>
</feature>
<feature type="strand" evidence="17">
    <location>
        <begin position="83"/>
        <end position="85"/>
    </location>
</feature>
<feature type="helix" evidence="14">
    <location>
        <begin position="86"/>
        <end position="88"/>
    </location>
</feature>
<feature type="strand" evidence="14">
    <location>
        <begin position="93"/>
        <end position="95"/>
    </location>
</feature>
<feature type="helix" evidence="14">
    <location>
        <begin position="96"/>
        <end position="122"/>
    </location>
</feature>
<feature type="helix" evidence="14">
    <location>
        <begin position="126"/>
        <end position="163"/>
    </location>
</feature>
<feature type="helix" evidence="14">
    <location>
        <begin position="165"/>
        <end position="167"/>
    </location>
</feature>
<feature type="helix" evidence="14">
    <location>
        <begin position="178"/>
        <end position="213"/>
    </location>
</feature>
<feature type="strand" evidence="16">
    <location>
        <begin position="214"/>
        <end position="216"/>
    </location>
</feature>
<feature type="helix" evidence="14">
    <location>
        <begin position="224"/>
        <end position="231"/>
    </location>
</feature>
<feature type="helix" evidence="14">
    <location>
        <begin position="233"/>
        <end position="236"/>
    </location>
</feature>
<feature type="helix" evidence="14">
    <location>
        <begin position="243"/>
        <end position="286"/>
    </location>
</feature>
<feature type="turn" evidence="14">
    <location>
        <begin position="287"/>
        <end position="290"/>
    </location>
</feature>
<feature type="helix" evidence="14">
    <location>
        <begin position="295"/>
        <end position="338"/>
    </location>
</feature>
<feature type="turn" evidence="14">
    <location>
        <begin position="339"/>
        <end position="342"/>
    </location>
</feature>
<feature type="helix" evidence="14">
    <location>
        <begin position="348"/>
        <end position="386"/>
    </location>
</feature>
<feature type="turn" evidence="14">
    <location>
        <begin position="391"/>
        <end position="393"/>
    </location>
</feature>
<feature type="helix" evidence="14">
    <location>
        <begin position="396"/>
        <end position="407"/>
    </location>
</feature>
<feature type="strand" evidence="15">
    <location>
        <begin position="417"/>
        <end position="419"/>
    </location>
</feature>
<feature type="helix" evidence="14">
    <location>
        <begin position="422"/>
        <end position="447"/>
    </location>
</feature>
<keyword id="KW-0002">3D-structure</keyword>
<keyword id="KW-1003">Cell membrane</keyword>
<keyword id="KW-0472">Membrane</keyword>
<keyword id="KW-0675">Receptor</keyword>
<keyword id="KW-1185">Reference proteome</keyword>
<keyword id="KW-0807">Transducer</keyword>
<keyword id="KW-0812">Transmembrane</keyword>
<keyword id="KW-1133">Transmembrane helix</keyword>
<accession>P83293</accession>
<accession>Q9VZJ7</accession>